<protein>
    <recommendedName>
        <fullName evidence="1">tRNA(Ile)-lysidine synthase, chloroplastic</fullName>
        <ecNumber evidence="1">6.3.4.19</ecNumber>
    </recommendedName>
    <alternativeName>
        <fullName evidence="1">tRNA(Ile)-2-lysyl-cytidine synthase</fullName>
    </alternativeName>
    <alternativeName>
        <fullName evidence="1">tRNA(Ile)-lysidine synthetase</fullName>
    </alternativeName>
</protein>
<evidence type="ECO:0000255" key="1">
    <source>
        <dbReference type="HAMAP-Rule" id="MF_01161"/>
    </source>
</evidence>
<keyword id="KW-0067">ATP-binding</keyword>
<keyword id="KW-0150">Chloroplast</keyword>
<keyword id="KW-0436">Ligase</keyword>
<keyword id="KW-0547">Nucleotide-binding</keyword>
<keyword id="KW-0934">Plastid</keyword>
<keyword id="KW-0819">tRNA processing</keyword>
<gene>
    <name evidence="1" type="primary">tilS</name>
</gene>
<proteinExistence type="inferred from homology"/>
<organism>
    <name type="scientific">Zygnema circumcarinatum</name>
    <name type="common">Green alga</name>
    <dbReference type="NCBI Taxonomy" id="35869"/>
    <lineage>
        <taxon>Eukaryota</taxon>
        <taxon>Viridiplantae</taxon>
        <taxon>Streptophyta</taxon>
        <taxon>Zygnematophyceae</taxon>
        <taxon>Zygnematophycidae</taxon>
        <taxon>Zygnematales</taxon>
        <taxon>Zygnemataceae</taxon>
        <taxon>Zygnema</taxon>
    </lineage>
</organism>
<sequence length="420" mass="48945">MLTNPIFYLTNSNTSKASTHSNTNSKSLFNTKREDLQILYKLNQLLIEKSILHPYQRILIAVSGGQDSICLLNILNKLRSTWHWKLGIVHCDHKWYLDSALQAIHVSRLAANMQIDLYQALTTQSVNNEQLARNWRYELIRHVAICHNFSVIVTGHTASDRVETLIYNLIRGSGISGLQSISWKRKLNSMLTIRMRSVEEQIILYSKHVKCYQNRENLLEDKKNVDIYLIRPLLNVSRMELKHLVQNWKLSIWSDCSNQNISICRNRIRHQLLPYLRQYFHPKIDYVLNSCTEVMYTETLYLDSIARYVLSKALSFISMPLNDQTCVKLDFELLRAVPLAIQRRILKYFLDVITHTSVSFKHVEQVRIACLITTNSSNQFAKDSMNFTDQLLINRSIYLPGKKILQVINARFLIICNNIT</sequence>
<accession>Q32RJ9</accession>
<feature type="chain" id="PRO_0000277072" description="tRNA(Ile)-lysidine synthase, chloroplastic">
    <location>
        <begin position="1"/>
        <end position="420"/>
    </location>
</feature>
<feature type="binding site" evidence="1">
    <location>
        <begin position="63"/>
        <end position="68"/>
    </location>
    <ligand>
        <name>ATP</name>
        <dbReference type="ChEBI" id="CHEBI:30616"/>
    </ligand>
</feature>
<reference key="1">
    <citation type="journal article" date="2005" name="BMC Biol.">
        <title>The complete chloroplast DNA sequences of the charophycean green algae Staurastrum and Zygnema reveal that the chloroplast genome underwent extensive changes during the evolution of the Zygnematales.</title>
        <authorList>
            <person name="Turmel M."/>
            <person name="Otis C."/>
            <person name="Lemieux C."/>
        </authorList>
    </citation>
    <scope>NUCLEOTIDE SEQUENCE [LARGE SCALE GENOMIC DNA]</scope>
</reference>
<comment type="function">
    <text evidence="1">Ligates lysine onto the cytidine present at position 34 of the AUA codon-specific tRNA(Ile) that contains the anticodon CAU, in an ATP-dependent manner. Cytidine is converted to lysidine, thus changing the amino acid specificity of the tRNA from methionine to isoleucine.</text>
</comment>
<comment type="catalytic activity">
    <reaction evidence="1">
        <text>cytidine(34) in tRNA(Ile2) + L-lysine + ATP = lysidine(34) in tRNA(Ile2) + AMP + diphosphate + H(+)</text>
        <dbReference type="Rhea" id="RHEA:43744"/>
        <dbReference type="Rhea" id="RHEA-COMP:10625"/>
        <dbReference type="Rhea" id="RHEA-COMP:10670"/>
        <dbReference type="ChEBI" id="CHEBI:15378"/>
        <dbReference type="ChEBI" id="CHEBI:30616"/>
        <dbReference type="ChEBI" id="CHEBI:32551"/>
        <dbReference type="ChEBI" id="CHEBI:33019"/>
        <dbReference type="ChEBI" id="CHEBI:82748"/>
        <dbReference type="ChEBI" id="CHEBI:83665"/>
        <dbReference type="ChEBI" id="CHEBI:456215"/>
        <dbReference type="EC" id="6.3.4.19"/>
    </reaction>
</comment>
<comment type="subcellular location">
    <subcellularLocation>
        <location>Plastid</location>
        <location>Chloroplast</location>
    </subcellularLocation>
</comment>
<comment type="domain">
    <text>The N-terminal region contains the highly conserved SGGXDS motif, predicted to be a P-loop motif involved in ATP binding.</text>
</comment>
<comment type="similarity">
    <text evidence="1">Belongs to the tRNA(Ile)-lysidine synthase family.</text>
</comment>
<geneLocation type="chloroplast"/>
<name>TILS_ZYGCR</name>
<dbReference type="EC" id="6.3.4.19" evidence="1"/>
<dbReference type="EMBL" id="AY958086">
    <property type="protein sequence ID" value="AAX45881.1"/>
    <property type="molecule type" value="Genomic_DNA"/>
</dbReference>
<dbReference type="SMR" id="Q32RJ9"/>
<dbReference type="GO" id="GO:0009507">
    <property type="term" value="C:chloroplast"/>
    <property type="evidence" value="ECO:0007669"/>
    <property type="project" value="UniProtKB-SubCell"/>
</dbReference>
<dbReference type="GO" id="GO:0005524">
    <property type="term" value="F:ATP binding"/>
    <property type="evidence" value="ECO:0007669"/>
    <property type="project" value="UniProtKB-UniRule"/>
</dbReference>
<dbReference type="GO" id="GO:0032267">
    <property type="term" value="F:tRNA(Ile)-lysidine synthase activity"/>
    <property type="evidence" value="ECO:0007669"/>
    <property type="project" value="UniProtKB-EC"/>
</dbReference>
<dbReference type="GO" id="GO:0006400">
    <property type="term" value="P:tRNA modification"/>
    <property type="evidence" value="ECO:0007669"/>
    <property type="project" value="UniProtKB-UniRule"/>
</dbReference>
<dbReference type="CDD" id="cd01992">
    <property type="entry name" value="TilS_N"/>
    <property type="match status" value="1"/>
</dbReference>
<dbReference type="Gene3D" id="1.20.59.20">
    <property type="match status" value="1"/>
</dbReference>
<dbReference type="Gene3D" id="3.40.50.620">
    <property type="entry name" value="HUPs"/>
    <property type="match status" value="1"/>
</dbReference>
<dbReference type="HAMAP" id="MF_01161">
    <property type="entry name" value="tRNA_Ile_lys_synt"/>
    <property type="match status" value="1"/>
</dbReference>
<dbReference type="InterPro" id="IPR014729">
    <property type="entry name" value="Rossmann-like_a/b/a_fold"/>
</dbReference>
<dbReference type="InterPro" id="IPR011063">
    <property type="entry name" value="TilS/TtcA_N"/>
</dbReference>
<dbReference type="InterPro" id="IPR012094">
    <property type="entry name" value="tRNA_Ile_lys_synt"/>
</dbReference>
<dbReference type="InterPro" id="IPR012795">
    <property type="entry name" value="tRNA_Ile_lys_synt_N"/>
</dbReference>
<dbReference type="NCBIfam" id="TIGR02432">
    <property type="entry name" value="lysidine_TilS_N"/>
    <property type="match status" value="1"/>
</dbReference>
<dbReference type="PANTHER" id="PTHR43033">
    <property type="entry name" value="TRNA(ILE)-LYSIDINE SYNTHASE-RELATED"/>
    <property type="match status" value="1"/>
</dbReference>
<dbReference type="PANTHER" id="PTHR43033:SF1">
    <property type="entry name" value="TRNA(ILE)-LYSIDINE SYNTHASE-RELATED"/>
    <property type="match status" value="1"/>
</dbReference>
<dbReference type="Pfam" id="PF01171">
    <property type="entry name" value="ATP_bind_3"/>
    <property type="match status" value="1"/>
</dbReference>
<dbReference type="SUPFAM" id="SSF52402">
    <property type="entry name" value="Adenine nucleotide alpha hydrolases-like"/>
    <property type="match status" value="1"/>
</dbReference>
<dbReference type="SUPFAM" id="SSF82829">
    <property type="entry name" value="MesJ substrate recognition domain-like"/>
    <property type="match status" value="1"/>
</dbReference>